<gene>
    <name evidence="1" type="primary">hemC</name>
    <name type="ordered locus">Lxx01100</name>
</gene>
<sequence>MIVSDGPAERRQGALRVGTRGSPLAVAQTQAVSAAVARATGFDIELVTVTTHGDTSRESLSELGGTGVFATALRDALRNGECDLVVHSLKDLPTAPAPGLVLGAVPKRADARDTLCARDGLRFGELPEGASVGTGSPRRAAQLRAQRPGLDIVDIRGNVDTRLSRVSAGDLDAVVLAAAGLGRLGRLDAATDFFSLSTMPTAPGQGALALEVREGDERGRGPIARALAAVDHATTCAATTAERAVLAGLEAGCAAPVGATAMIDDGLLFLTATVYRPDGAAQLTASHAATPDSFGAAHLDEAARDVGERVVAELLASGAADLAPLKGLR</sequence>
<dbReference type="EC" id="2.5.1.61" evidence="1"/>
<dbReference type="EMBL" id="AE016822">
    <property type="protein sequence ID" value="AAT88194.1"/>
    <property type="molecule type" value="Genomic_DNA"/>
</dbReference>
<dbReference type="RefSeq" id="WP_011185199.1">
    <property type="nucleotide sequence ID" value="NC_006087.1"/>
</dbReference>
<dbReference type="SMR" id="Q6AHF1"/>
<dbReference type="STRING" id="281090.Lxx01100"/>
<dbReference type="KEGG" id="lxx:Lxx01100"/>
<dbReference type="eggNOG" id="COG0181">
    <property type="taxonomic scope" value="Bacteria"/>
</dbReference>
<dbReference type="HOGENOM" id="CLU_019704_1_0_11"/>
<dbReference type="Proteomes" id="UP000001306">
    <property type="component" value="Chromosome"/>
</dbReference>
<dbReference type="GO" id="GO:0005737">
    <property type="term" value="C:cytoplasm"/>
    <property type="evidence" value="ECO:0007669"/>
    <property type="project" value="TreeGrafter"/>
</dbReference>
<dbReference type="GO" id="GO:0004418">
    <property type="term" value="F:hydroxymethylbilane synthase activity"/>
    <property type="evidence" value="ECO:0007669"/>
    <property type="project" value="UniProtKB-UniRule"/>
</dbReference>
<dbReference type="GO" id="GO:0006782">
    <property type="term" value="P:protoporphyrinogen IX biosynthetic process"/>
    <property type="evidence" value="ECO:0007669"/>
    <property type="project" value="UniProtKB-UniRule"/>
</dbReference>
<dbReference type="FunFam" id="3.40.190.10:FF:000005">
    <property type="entry name" value="Porphobilinogen deaminase"/>
    <property type="match status" value="1"/>
</dbReference>
<dbReference type="Gene3D" id="3.40.190.10">
    <property type="entry name" value="Periplasmic binding protein-like II"/>
    <property type="match status" value="2"/>
</dbReference>
<dbReference type="Gene3D" id="3.30.160.40">
    <property type="entry name" value="Porphobilinogen deaminase, C-terminal domain"/>
    <property type="match status" value="1"/>
</dbReference>
<dbReference type="HAMAP" id="MF_00260">
    <property type="entry name" value="Porphobil_deam"/>
    <property type="match status" value="1"/>
</dbReference>
<dbReference type="InterPro" id="IPR000860">
    <property type="entry name" value="HemC"/>
</dbReference>
<dbReference type="InterPro" id="IPR022419">
    <property type="entry name" value="Porphobilin_deaminase_cofac_BS"/>
</dbReference>
<dbReference type="InterPro" id="IPR022417">
    <property type="entry name" value="Porphobilin_deaminase_N"/>
</dbReference>
<dbReference type="InterPro" id="IPR022418">
    <property type="entry name" value="Porphobilinogen_deaminase_C"/>
</dbReference>
<dbReference type="InterPro" id="IPR036803">
    <property type="entry name" value="Porphobilinogen_deaminase_C_sf"/>
</dbReference>
<dbReference type="NCBIfam" id="TIGR00212">
    <property type="entry name" value="hemC"/>
    <property type="match status" value="1"/>
</dbReference>
<dbReference type="PANTHER" id="PTHR11557">
    <property type="entry name" value="PORPHOBILINOGEN DEAMINASE"/>
    <property type="match status" value="1"/>
</dbReference>
<dbReference type="PANTHER" id="PTHR11557:SF0">
    <property type="entry name" value="PORPHOBILINOGEN DEAMINASE"/>
    <property type="match status" value="1"/>
</dbReference>
<dbReference type="Pfam" id="PF01379">
    <property type="entry name" value="Porphobil_deam"/>
    <property type="match status" value="1"/>
</dbReference>
<dbReference type="Pfam" id="PF03900">
    <property type="entry name" value="Porphobil_deamC"/>
    <property type="match status" value="1"/>
</dbReference>
<dbReference type="PIRSF" id="PIRSF001438">
    <property type="entry name" value="4pyrrol_synth_OHMeBilane_synth"/>
    <property type="match status" value="1"/>
</dbReference>
<dbReference type="PRINTS" id="PR00151">
    <property type="entry name" value="PORPHBDMNASE"/>
</dbReference>
<dbReference type="SUPFAM" id="SSF53850">
    <property type="entry name" value="Periplasmic binding protein-like II"/>
    <property type="match status" value="1"/>
</dbReference>
<dbReference type="SUPFAM" id="SSF54782">
    <property type="entry name" value="Porphobilinogen deaminase (hydroxymethylbilane synthase), C-terminal domain"/>
    <property type="match status" value="1"/>
</dbReference>
<dbReference type="PROSITE" id="PS00533">
    <property type="entry name" value="PORPHOBILINOGEN_DEAM"/>
    <property type="match status" value="1"/>
</dbReference>
<proteinExistence type="inferred from homology"/>
<evidence type="ECO:0000255" key="1">
    <source>
        <dbReference type="HAMAP-Rule" id="MF_00260"/>
    </source>
</evidence>
<protein>
    <recommendedName>
        <fullName evidence="1">Porphobilinogen deaminase</fullName>
        <shortName evidence="1">PBG</shortName>
        <ecNumber evidence="1">2.5.1.61</ecNumber>
    </recommendedName>
    <alternativeName>
        <fullName evidence="1">Hydroxymethylbilane synthase</fullName>
        <shortName evidence="1">HMBS</shortName>
    </alternativeName>
    <alternativeName>
        <fullName evidence="1">Pre-uroporphyrinogen synthase</fullName>
    </alternativeName>
</protein>
<keyword id="KW-0627">Porphyrin biosynthesis</keyword>
<keyword id="KW-1185">Reference proteome</keyword>
<keyword id="KW-0808">Transferase</keyword>
<feature type="chain" id="PRO_0000142951" description="Porphobilinogen deaminase">
    <location>
        <begin position="1"/>
        <end position="329"/>
    </location>
</feature>
<feature type="modified residue" description="S-(dipyrrolylmethanemethyl)cysteine" evidence="1">
    <location>
        <position position="253"/>
    </location>
</feature>
<accession>Q6AHF1</accession>
<reference key="1">
    <citation type="journal article" date="2004" name="Mol. Plant Microbe Interact.">
        <title>The genome sequence of the Gram-positive sugarcane pathogen Leifsonia xyli subsp. xyli.</title>
        <authorList>
            <person name="Monteiro-Vitorello C.B."/>
            <person name="Camargo L.E.A."/>
            <person name="Van Sluys M.A."/>
            <person name="Kitajima J.P."/>
            <person name="Truffi D."/>
            <person name="do Amaral A.M."/>
            <person name="Harakava R."/>
            <person name="de Oliveira J.C.F."/>
            <person name="Wood D."/>
            <person name="de Oliveira M.C."/>
            <person name="Miyaki C.Y."/>
            <person name="Takita M.A."/>
            <person name="da Silva A.C.R."/>
            <person name="Furlan L.R."/>
            <person name="Carraro D.M."/>
            <person name="Camarotte G."/>
            <person name="Almeida N.F. Jr."/>
            <person name="Carrer H."/>
            <person name="Coutinho L.L."/>
            <person name="El-Dorry H.A."/>
            <person name="Ferro M.I.T."/>
            <person name="Gagliardi P.R."/>
            <person name="Giglioti E."/>
            <person name="Goldman M.H.S."/>
            <person name="Goldman G.H."/>
            <person name="Kimura E.T."/>
            <person name="Ferro E.S."/>
            <person name="Kuramae E.E."/>
            <person name="Lemos E.G.M."/>
            <person name="Lemos M.V.F."/>
            <person name="Mauro S.M.Z."/>
            <person name="Machado M.A."/>
            <person name="Marino C.L."/>
            <person name="Menck C.F."/>
            <person name="Nunes L.R."/>
            <person name="Oliveira R.C."/>
            <person name="Pereira G.G."/>
            <person name="Siqueira W."/>
            <person name="de Souza A.A."/>
            <person name="Tsai S.M."/>
            <person name="Zanca A.S."/>
            <person name="Simpson A.J.G."/>
            <person name="Brumbley S.M."/>
            <person name="Setubal J.C."/>
        </authorList>
    </citation>
    <scope>NUCLEOTIDE SEQUENCE [LARGE SCALE GENOMIC DNA]</scope>
    <source>
        <strain>CTCB07</strain>
    </source>
</reference>
<name>HEM3_LEIXX</name>
<comment type="function">
    <text evidence="1">Tetrapolymerization of the monopyrrole PBG into the hydroxymethylbilane pre-uroporphyrinogen in several discrete steps.</text>
</comment>
<comment type="catalytic activity">
    <reaction evidence="1">
        <text>4 porphobilinogen + H2O = hydroxymethylbilane + 4 NH4(+)</text>
        <dbReference type="Rhea" id="RHEA:13185"/>
        <dbReference type="ChEBI" id="CHEBI:15377"/>
        <dbReference type="ChEBI" id="CHEBI:28938"/>
        <dbReference type="ChEBI" id="CHEBI:57845"/>
        <dbReference type="ChEBI" id="CHEBI:58126"/>
        <dbReference type="EC" id="2.5.1.61"/>
    </reaction>
</comment>
<comment type="cofactor">
    <cofactor evidence="1">
        <name>dipyrromethane</name>
        <dbReference type="ChEBI" id="CHEBI:60342"/>
    </cofactor>
    <text evidence="1">Binds 1 dipyrromethane group covalently.</text>
</comment>
<comment type="subunit">
    <text evidence="1">Monomer.</text>
</comment>
<comment type="miscellaneous">
    <text evidence="1">The porphobilinogen subunits are added to the dipyrromethane group.</text>
</comment>
<comment type="similarity">
    <text evidence="1">Belongs to the HMBS family.</text>
</comment>
<organism>
    <name type="scientific">Leifsonia xyli subsp. xyli (strain CTCB07)</name>
    <dbReference type="NCBI Taxonomy" id="281090"/>
    <lineage>
        <taxon>Bacteria</taxon>
        <taxon>Bacillati</taxon>
        <taxon>Actinomycetota</taxon>
        <taxon>Actinomycetes</taxon>
        <taxon>Micrococcales</taxon>
        <taxon>Microbacteriaceae</taxon>
        <taxon>Leifsonia</taxon>
    </lineage>
</organism>